<sequence length="108" mass="12714">MVHTTVYGLAYLFYSGINCILLYQLEIESKFYIRYQLIMRVQKETTDAFTLQLASKEVITSSIYNTFNNTNEHMYLQPICNRIFLMTSIIDIASFKAQVLFLNIFMIK</sequence>
<gene>
    <name type="ORF">SPBC27.05</name>
</gene>
<accession>Q9P6S2</accession>
<accession>P78938</accession>
<evidence type="ECO:0000255" key="1"/>
<evidence type="ECO:0000305" key="2"/>
<proteinExistence type="predicted"/>
<reference key="1">
    <citation type="submission" date="1996-03" db="EMBL/GenBank/DDBJ databases">
        <title>S.pombe chromosome II cosmid 1228 sequence.</title>
        <authorList>
            <person name="Kohnosu A."/>
            <person name="Niwa O."/>
            <person name="Yano M."/>
            <person name="Saitoh S."/>
            <person name="Katayama T."/>
            <person name="Nagao K."/>
            <person name="Yanagida M."/>
        </authorList>
    </citation>
    <scope>NUCLEOTIDE SEQUENCE [GENOMIC DNA]</scope>
    <source>
        <strain>972 / ATCC 24843</strain>
    </source>
</reference>
<reference key="2">
    <citation type="journal article" date="2002" name="Nature">
        <title>The genome sequence of Schizosaccharomyces pombe.</title>
        <authorList>
            <person name="Wood V."/>
            <person name="Gwilliam R."/>
            <person name="Rajandream M.A."/>
            <person name="Lyne M.H."/>
            <person name="Lyne R."/>
            <person name="Stewart A."/>
            <person name="Sgouros J.G."/>
            <person name="Peat N."/>
            <person name="Hayles J."/>
            <person name="Baker S.G."/>
            <person name="Basham D."/>
            <person name="Bowman S."/>
            <person name="Brooks K."/>
            <person name="Brown D."/>
            <person name="Brown S."/>
            <person name="Chillingworth T."/>
            <person name="Churcher C.M."/>
            <person name="Collins M."/>
            <person name="Connor R."/>
            <person name="Cronin A."/>
            <person name="Davis P."/>
            <person name="Feltwell T."/>
            <person name="Fraser A."/>
            <person name="Gentles S."/>
            <person name="Goble A."/>
            <person name="Hamlin N."/>
            <person name="Harris D.E."/>
            <person name="Hidalgo J."/>
            <person name="Hodgson G."/>
            <person name="Holroyd S."/>
            <person name="Hornsby T."/>
            <person name="Howarth S."/>
            <person name="Huckle E.J."/>
            <person name="Hunt S."/>
            <person name="Jagels K."/>
            <person name="James K.D."/>
            <person name="Jones L."/>
            <person name="Jones M."/>
            <person name="Leather S."/>
            <person name="McDonald S."/>
            <person name="McLean J."/>
            <person name="Mooney P."/>
            <person name="Moule S."/>
            <person name="Mungall K.L."/>
            <person name="Murphy L.D."/>
            <person name="Niblett D."/>
            <person name="Odell C."/>
            <person name="Oliver K."/>
            <person name="O'Neil S."/>
            <person name="Pearson D."/>
            <person name="Quail M.A."/>
            <person name="Rabbinowitsch E."/>
            <person name="Rutherford K.M."/>
            <person name="Rutter S."/>
            <person name="Saunders D."/>
            <person name="Seeger K."/>
            <person name="Sharp S."/>
            <person name="Skelton J."/>
            <person name="Simmonds M.N."/>
            <person name="Squares R."/>
            <person name="Squares S."/>
            <person name="Stevens K."/>
            <person name="Taylor K."/>
            <person name="Taylor R.G."/>
            <person name="Tivey A."/>
            <person name="Walsh S.V."/>
            <person name="Warren T."/>
            <person name="Whitehead S."/>
            <person name="Woodward J.R."/>
            <person name="Volckaert G."/>
            <person name="Aert R."/>
            <person name="Robben J."/>
            <person name="Grymonprez B."/>
            <person name="Weltjens I."/>
            <person name="Vanstreels E."/>
            <person name="Rieger M."/>
            <person name="Schaefer M."/>
            <person name="Mueller-Auer S."/>
            <person name="Gabel C."/>
            <person name="Fuchs M."/>
            <person name="Duesterhoeft A."/>
            <person name="Fritzc C."/>
            <person name="Holzer E."/>
            <person name="Moestl D."/>
            <person name="Hilbert H."/>
            <person name="Borzym K."/>
            <person name="Langer I."/>
            <person name="Beck A."/>
            <person name="Lehrach H."/>
            <person name="Reinhardt R."/>
            <person name="Pohl T.M."/>
            <person name="Eger P."/>
            <person name="Zimmermann W."/>
            <person name="Wedler H."/>
            <person name="Wambutt R."/>
            <person name="Purnelle B."/>
            <person name="Goffeau A."/>
            <person name="Cadieu E."/>
            <person name="Dreano S."/>
            <person name="Gloux S."/>
            <person name="Lelaure V."/>
            <person name="Mottier S."/>
            <person name="Galibert F."/>
            <person name="Aves S.J."/>
            <person name="Xiang Z."/>
            <person name="Hunt C."/>
            <person name="Moore K."/>
            <person name="Hurst S.M."/>
            <person name="Lucas M."/>
            <person name="Rochet M."/>
            <person name="Gaillardin C."/>
            <person name="Tallada V.A."/>
            <person name="Garzon A."/>
            <person name="Thode G."/>
            <person name="Daga R.R."/>
            <person name="Cruzado L."/>
            <person name="Jimenez J."/>
            <person name="Sanchez M."/>
            <person name="del Rey F."/>
            <person name="Benito J."/>
            <person name="Dominguez A."/>
            <person name="Revuelta J.L."/>
            <person name="Moreno S."/>
            <person name="Armstrong J."/>
            <person name="Forsburg S.L."/>
            <person name="Cerutti L."/>
            <person name="Lowe T."/>
            <person name="McCombie W.R."/>
            <person name="Paulsen I."/>
            <person name="Potashkin J."/>
            <person name="Shpakovski G.V."/>
            <person name="Ussery D."/>
            <person name="Barrell B.G."/>
            <person name="Nurse P."/>
        </authorList>
    </citation>
    <scope>NUCLEOTIDE SEQUENCE [LARGE SCALE GENOMIC DNA]</scope>
    <source>
        <strain>972 / ATCC 24843</strain>
    </source>
</reference>
<feature type="chain" id="PRO_0000116856" description="Uncharacterized protein C27.05">
    <location>
        <begin position="1"/>
        <end position="108"/>
    </location>
</feature>
<feature type="transmembrane region" description="Helical" evidence="1">
    <location>
        <begin position="5"/>
        <end position="27"/>
    </location>
</feature>
<feature type="transmembrane region" description="Helical" evidence="1">
    <location>
        <begin position="83"/>
        <end position="105"/>
    </location>
</feature>
<feature type="sequence conflict" description="In Ref. 1; BAA12188." evidence="2" ref="1">
    <original>V</original>
    <variation>A</variation>
    <location>
        <position position="2"/>
    </location>
</feature>
<feature type="sequence conflict" description="In Ref. 1; BAA12188." evidence="2" ref="1">
    <original>V</original>
    <variation>D</variation>
    <location>
        <position position="6"/>
    </location>
</feature>
<feature type="sequence conflict" description="In Ref. 1; BAA12188." evidence="2" ref="1">
    <original>E</original>
    <variation>V</variation>
    <location>
        <position position="28"/>
    </location>
</feature>
<feature type="sequence conflict" description="In Ref. 1; BAA12188." evidence="2" ref="1">
    <original>Q</original>
    <variation>H</variation>
    <location>
        <position position="42"/>
    </location>
</feature>
<comment type="subcellular location">
    <subcellularLocation>
        <location evidence="2">Membrane</location>
        <topology evidence="2">Multi-pass membrane protein</topology>
    </subcellularLocation>
</comment>
<organism>
    <name type="scientific">Schizosaccharomyces pombe (strain 972 / ATCC 24843)</name>
    <name type="common">Fission yeast</name>
    <dbReference type="NCBI Taxonomy" id="284812"/>
    <lineage>
        <taxon>Eukaryota</taxon>
        <taxon>Fungi</taxon>
        <taxon>Dikarya</taxon>
        <taxon>Ascomycota</taxon>
        <taxon>Taphrinomycotina</taxon>
        <taxon>Schizosaccharomycetes</taxon>
        <taxon>Schizosaccharomycetales</taxon>
        <taxon>Schizosaccharomycetaceae</taxon>
        <taxon>Schizosaccharomyces</taxon>
    </lineage>
</organism>
<name>YNL5_SCHPO</name>
<protein>
    <recommendedName>
        <fullName>Uncharacterized protein C27.05</fullName>
    </recommendedName>
</protein>
<keyword id="KW-0472">Membrane</keyword>
<keyword id="KW-1185">Reference proteome</keyword>
<keyword id="KW-0812">Transmembrane</keyword>
<keyword id="KW-1133">Transmembrane helix</keyword>
<dbReference type="EMBL" id="D83992">
    <property type="protein sequence ID" value="BAA12188.1"/>
    <property type="molecule type" value="Genomic_DNA"/>
</dbReference>
<dbReference type="EMBL" id="CU329671">
    <property type="protein sequence ID" value="CAB89005.1"/>
    <property type="molecule type" value="Genomic_DNA"/>
</dbReference>
<dbReference type="RefSeq" id="NP_595660.1">
    <property type="nucleotide sequence ID" value="NM_001021554.1"/>
</dbReference>
<dbReference type="BioGRID" id="276946">
    <property type="interactions" value="3"/>
</dbReference>
<dbReference type="STRING" id="284812.Q9P6S2"/>
<dbReference type="PaxDb" id="4896-SPBC27.05.1"/>
<dbReference type="EnsemblFungi" id="SPBC27.05.1">
    <property type="protein sequence ID" value="SPBC27.05.1:pep"/>
    <property type="gene ID" value="SPBC27.05"/>
</dbReference>
<dbReference type="KEGG" id="spo:2540418"/>
<dbReference type="PomBase" id="SPBC27.05"/>
<dbReference type="VEuPathDB" id="FungiDB:SPBC27.05"/>
<dbReference type="HOGENOM" id="CLU_2198515_0_0_1"/>
<dbReference type="InParanoid" id="Q9P6S2"/>
<dbReference type="PRO" id="PR:Q9P6S2"/>
<dbReference type="Proteomes" id="UP000002485">
    <property type="component" value="Chromosome II"/>
</dbReference>
<dbReference type="GO" id="GO:0016020">
    <property type="term" value="C:membrane"/>
    <property type="evidence" value="ECO:0007669"/>
    <property type="project" value="UniProtKB-SubCell"/>
</dbReference>